<comment type="catalytic activity">
    <reaction evidence="1">
        <text>urea + 2 H2O + H(+) = hydrogencarbonate + 2 NH4(+)</text>
        <dbReference type="Rhea" id="RHEA:20557"/>
        <dbReference type="ChEBI" id="CHEBI:15377"/>
        <dbReference type="ChEBI" id="CHEBI:15378"/>
        <dbReference type="ChEBI" id="CHEBI:16199"/>
        <dbReference type="ChEBI" id="CHEBI:17544"/>
        <dbReference type="ChEBI" id="CHEBI:28938"/>
        <dbReference type="EC" id="3.5.1.5"/>
    </reaction>
</comment>
<comment type="cofactor">
    <cofactor evidence="1">
        <name>Ni cation</name>
        <dbReference type="ChEBI" id="CHEBI:25516"/>
    </cofactor>
    <text evidence="1">Binds 2 nickel ions per subunit.</text>
</comment>
<comment type="pathway">
    <text evidence="1">Nitrogen metabolism; urea degradation; CO(2) and NH(3) from urea (urease route): step 1/1.</text>
</comment>
<comment type="subunit">
    <text evidence="1">Heterohexamer of 3 UreA (alpha) and 3 UreB (beta) subunits.</text>
</comment>
<comment type="subcellular location">
    <subcellularLocation>
        <location evidence="1">Cytoplasm</location>
    </subcellularLocation>
</comment>
<comment type="induction">
    <text evidence="2">By nickel ions.</text>
</comment>
<comment type="PTM">
    <text evidence="1">Carboxylation allows a single lysine to coordinate two nickel ions.</text>
</comment>
<comment type="similarity">
    <text evidence="1">Belongs to the metallo-dependent hydrolases superfamily. Urease alpha subunit family.</text>
</comment>
<comment type="caution">
    <text evidence="3">The orthologous protein is known as the alpha subunit (UreC) in most other bacteria.</text>
</comment>
<gene>
    <name evidence="1" type="primary">ureB</name>
    <name type="ordered locus">HH_0408</name>
</gene>
<accession>Q93PJ4</accession>
<accession>Q7BYA2</accession>
<reference key="1">
    <citation type="journal article" date="2001" name="Infect. Immun.">
        <title>Cloning, expression, and catalytic activity of Helicobacter hepaticus urease.</title>
        <authorList>
            <person name="Beckwith C.S."/>
            <person name="McGee D.J."/>
            <person name="Mobley H.L.T."/>
            <person name="Riley L.K."/>
        </authorList>
    </citation>
    <scope>NUCLEOTIDE SEQUENCE [GENOMIC DNA]</scope>
    <source>
        <strain>MU94-1</strain>
    </source>
</reference>
<reference key="2">
    <citation type="journal article" date="2003" name="Proc. Natl. Acad. Sci. U.S.A.">
        <title>The complete genome sequence of the carcinogenic bacterium Helicobacter hepaticus.</title>
        <authorList>
            <person name="Suerbaum S."/>
            <person name="Josenhans C."/>
            <person name="Sterzenbach T."/>
            <person name="Drescher B."/>
            <person name="Brandt P."/>
            <person name="Bell M."/>
            <person name="Droege M."/>
            <person name="Fartmann B."/>
            <person name="Fischer H.-P."/>
            <person name="Ge Z."/>
            <person name="Hoerster A."/>
            <person name="Holland R."/>
            <person name="Klein K."/>
            <person name="Koenig J."/>
            <person name="Macko L."/>
            <person name="Mendz G.L."/>
            <person name="Nyakatura G."/>
            <person name="Schauer D.B."/>
            <person name="Shen Z."/>
            <person name="Weber J."/>
            <person name="Frosch M."/>
            <person name="Fox J.G."/>
        </authorList>
    </citation>
    <scope>NUCLEOTIDE SEQUENCE [LARGE SCALE GENOMIC DNA]</scope>
    <source>
        <strain>ATCC 51449 / 3B1</strain>
    </source>
</reference>
<reference key="3">
    <citation type="journal article" date="2005" name="Microbiology">
        <title>Differential regulation of urease activity in Helicobacter hepaticus and Helicobacter pylori.</title>
        <authorList>
            <person name="Belzer C."/>
            <person name="Stoof J."/>
            <person name="Beckwith C.S."/>
            <person name="Kuipers E.J."/>
            <person name="Kusters J.G."/>
            <person name="van Vliet A.H.M."/>
        </authorList>
    </citation>
    <scope>INDUCTION</scope>
</reference>
<protein>
    <recommendedName>
        <fullName evidence="1">Urease subunit beta</fullName>
        <ecNumber evidence="1">3.5.1.5</ecNumber>
    </recommendedName>
    <alternativeName>
        <fullName evidence="1">Urea amidohydrolase subunit beta</fullName>
    </alternativeName>
</protein>
<sequence>MIKISRKQYASMYGPTTGDKVRLGDTNLFAEIEKDYTLYGEEIKFGGGKTIRDGMAQSASTYTNELDAVITNAMIIDYTGIYKADIGIKGGKIVGIGKAGNPDTQDSVNEAMVVGAATEVIAGEGQIITAGGIDTHIHFISPTQIPTALYSGVTTMIGGGTGPAAGTNATTCTPGKWNMHQMLRAAESYAMNLGFFGKGNSSNEEGLEEQIKAGALGLKVHEDWGSTPAAINHALNVAQKYDVQVAIHTDTLNEAGCVEDTMKAIDGRTIHTFHTEGAGGGHAPDIIKAAGEPNILPASTNPTIPFTKNTADEHLDMLMVCHHLDKKIKEDVAFADSRIRPETIAAEDTLHDMGIFSITSSDSQAMGRVGEVITRTWQTADKCKNEFGALKEECGENDNFRIKRYISKYTINPAIAHGISEYVGSVEVGKFADLVLWKPSMFGIKPEMILKNGMIVAAKIGDSNASIPTPEPVVYAPMFGSYGKAKYNCAITFVSKIAYDCHIKEELGLERILLPVKNCRNITKKDMKFNDVITPIEVNPETYEVRVNNTKITSKPVEKVSLGQLYCLF</sequence>
<feature type="chain" id="PRO_0000234158" description="Urease subunit beta">
    <location>
        <begin position="1"/>
        <end position="569"/>
    </location>
</feature>
<feature type="domain" description="Urease" evidence="1">
    <location>
        <begin position="131"/>
        <end position="569"/>
    </location>
</feature>
<feature type="active site" description="Proton donor" evidence="1">
    <location>
        <position position="322"/>
    </location>
</feature>
<feature type="binding site" evidence="1">
    <location>
        <position position="136"/>
    </location>
    <ligand>
        <name>Ni(2+)</name>
        <dbReference type="ChEBI" id="CHEBI:49786"/>
        <label>1</label>
    </ligand>
</feature>
<feature type="binding site" evidence="1">
    <location>
        <position position="138"/>
    </location>
    <ligand>
        <name>Ni(2+)</name>
        <dbReference type="ChEBI" id="CHEBI:49786"/>
        <label>1</label>
    </ligand>
</feature>
<feature type="binding site" description="via carbamate group" evidence="1">
    <location>
        <position position="219"/>
    </location>
    <ligand>
        <name>Ni(2+)</name>
        <dbReference type="ChEBI" id="CHEBI:49786"/>
        <label>1</label>
    </ligand>
</feature>
<feature type="binding site" description="via carbamate group" evidence="1">
    <location>
        <position position="219"/>
    </location>
    <ligand>
        <name>Ni(2+)</name>
        <dbReference type="ChEBI" id="CHEBI:49786"/>
        <label>2</label>
    </ligand>
</feature>
<feature type="binding site" evidence="1">
    <location>
        <position position="221"/>
    </location>
    <ligand>
        <name>substrate</name>
    </ligand>
</feature>
<feature type="binding site" evidence="1">
    <location>
        <position position="248"/>
    </location>
    <ligand>
        <name>Ni(2+)</name>
        <dbReference type="ChEBI" id="CHEBI:49786"/>
        <label>2</label>
    </ligand>
</feature>
<feature type="binding site" evidence="1">
    <location>
        <position position="274"/>
    </location>
    <ligand>
        <name>Ni(2+)</name>
        <dbReference type="ChEBI" id="CHEBI:49786"/>
        <label>2</label>
    </ligand>
</feature>
<feature type="binding site" evidence="1">
    <location>
        <position position="362"/>
    </location>
    <ligand>
        <name>Ni(2+)</name>
        <dbReference type="ChEBI" id="CHEBI:49786"/>
        <label>1</label>
    </ligand>
</feature>
<feature type="modified residue" description="N6-carboxylysine" evidence="1">
    <location>
        <position position="219"/>
    </location>
</feature>
<dbReference type="EC" id="3.5.1.5" evidence="1"/>
<dbReference type="EMBL" id="AF332656">
    <property type="protein sequence ID" value="AAK69199.1"/>
    <property type="molecule type" value="Genomic_DNA"/>
</dbReference>
<dbReference type="EMBL" id="AE017125">
    <property type="protein sequence ID" value="AAP77005.1"/>
    <property type="molecule type" value="Genomic_DNA"/>
</dbReference>
<dbReference type="RefSeq" id="WP_011115250.1">
    <property type="nucleotide sequence ID" value="NC_004917.1"/>
</dbReference>
<dbReference type="SMR" id="Q93PJ4"/>
<dbReference type="STRING" id="235279.HH_0408"/>
<dbReference type="MEROPS" id="M38.982"/>
<dbReference type="KEGG" id="hhe:HH_0408"/>
<dbReference type="eggNOG" id="COG0804">
    <property type="taxonomic scope" value="Bacteria"/>
</dbReference>
<dbReference type="HOGENOM" id="CLU_000980_0_0_7"/>
<dbReference type="OrthoDB" id="9802793at2"/>
<dbReference type="BRENDA" id="3.5.1.5">
    <property type="organism ID" value="7587"/>
</dbReference>
<dbReference type="UniPathway" id="UPA00258">
    <property type="reaction ID" value="UER00370"/>
</dbReference>
<dbReference type="Proteomes" id="UP000002495">
    <property type="component" value="Chromosome"/>
</dbReference>
<dbReference type="GO" id="GO:0005737">
    <property type="term" value="C:cytoplasm"/>
    <property type="evidence" value="ECO:0007669"/>
    <property type="project" value="UniProtKB-SubCell"/>
</dbReference>
<dbReference type="GO" id="GO:0016151">
    <property type="term" value="F:nickel cation binding"/>
    <property type="evidence" value="ECO:0007669"/>
    <property type="project" value="UniProtKB-UniRule"/>
</dbReference>
<dbReference type="GO" id="GO:0009039">
    <property type="term" value="F:urease activity"/>
    <property type="evidence" value="ECO:0007669"/>
    <property type="project" value="UniProtKB-UniRule"/>
</dbReference>
<dbReference type="GO" id="GO:0043419">
    <property type="term" value="P:urea catabolic process"/>
    <property type="evidence" value="ECO:0007669"/>
    <property type="project" value="UniProtKB-UniRule"/>
</dbReference>
<dbReference type="CDD" id="cd00375">
    <property type="entry name" value="Urease_alpha"/>
    <property type="match status" value="1"/>
</dbReference>
<dbReference type="Gene3D" id="3.20.20.140">
    <property type="entry name" value="Metal-dependent hydrolases"/>
    <property type="match status" value="1"/>
</dbReference>
<dbReference type="Gene3D" id="2.30.40.10">
    <property type="entry name" value="Urease, subunit C, domain 1"/>
    <property type="match status" value="1"/>
</dbReference>
<dbReference type="HAMAP" id="MF_01953">
    <property type="entry name" value="Urease_alpha"/>
    <property type="match status" value="1"/>
</dbReference>
<dbReference type="InterPro" id="IPR006680">
    <property type="entry name" value="Amidohydro-rel"/>
</dbReference>
<dbReference type="InterPro" id="IPR011059">
    <property type="entry name" value="Metal-dep_hydrolase_composite"/>
</dbReference>
<dbReference type="InterPro" id="IPR032466">
    <property type="entry name" value="Metal_Hydrolase"/>
</dbReference>
<dbReference type="InterPro" id="IPR011612">
    <property type="entry name" value="Urease_alpha_N_dom"/>
</dbReference>
<dbReference type="InterPro" id="IPR050112">
    <property type="entry name" value="Urease_alpha_subunit"/>
</dbReference>
<dbReference type="InterPro" id="IPR017950">
    <property type="entry name" value="Urease_AS"/>
</dbReference>
<dbReference type="InterPro" id="IPR005848">
    <property type="entry name" value="Urease_asu"/>
</dbReference>
<dbReference type="InterPro" id="IPR017951">
    <property type="entry name" value="Urease_asu_c"/>
</dbReference>
<dbReference type="InterPro" id="IPR029754">
    <property type="entry name" value="Urease_Ni-bd"/>
</dbReference>
<dbReference type="NCBIfam" id="NF009686">
    <property type="entry name" value="PRK13207.1"/>
    <property type="match status" value="1"/>
</dbReference>
<dbReference type="NCBIfam" id="NF010591">
    <property type="entry name" value="PRK13985.1"/>
    <property type="match status" value="1"/>
</dbReference>
<dbReference type="NCBIfam" id="TIGR01792">
    <property type="entry name" value="urease_alph"/>
    <property type="match status" value="1"/>
</dbReference>
<dbReference type="PANTHER" id="PTHR43440">
    <property type="entry name" value="UREASE"/>
    <property type="match status" value="1"/>
</dbReference>
<dbReference type="PANTHER" id="PTHR43440:SF1">
    <property type="entry name" value="UREASE"/>
    <property type="match status" value="1"/>
</dbReference>
<dbReference type="Pfam" id="PF01979">
    <property type="entry name" value="Amidohydro_1"/>
    <property type="match status" value="1"/>
</dbReference>
<dbReference type="Pfam" id="PF00449">
    <property type="entry name" value="Urease_alpha"/>
    <property type="match status" value="1"/>
</dbReference>
<dbReference type="PRINTS" id="PR01752">
    <property type="entry name" value="UREASE"/>
</dbReference>
<dbReference type="SUPFAM" id="SSF51338">
    <property type="entry name" value="Composite domain of metallo-dependent hydrolases"/>
    <property type="match status" value="2"/>
</dbReference>
<dbReference type="SUPFAM" id="SSF51556">
    <property type="entry name" value="Metallo-dependent hydrolases"/>
    <property type="match status" value="1"/>
</dbReference>
<dbReference type="PROSITE" id="PS01120">
    <property type="entry name" value="UREASE_1"/>
    <property type="match status" value="1"/>
</dbReference>
<dbReference type="PROSITE" id="PS00145">
    <property type="entry name" value="UREASE_2"/>
    <property type="match status" value="1"/>
</dbReference>
<dbReference type="PROSITE" id="PS51368">
    <property type="entry name" value="UREASE_3"/>
    <property type="match status" value="1"/>
</dbReference>
<proteinExistence type="evidence at transcript level"/>
<evidence type="ECO:0000255" key="1">
    <source>
        <dbReference type="HAMAP-Rule" id="MF_01953"/>
    </source>
</evidence>
<evidence type="ECO:0000269" key="2">
    <source>
    </source>
</evidence>
<evidence type="ECO:0000305" key="3"/>
<organism>
    <name type="scientific">Helicobacter hepaticus (strain ATCC 51449 / 3B1)</name>
    <dbReference type="NCBI Taxonomy" id="235279"/>
    <lineage>
        <taxon>Bacteria</taxon>
        <taxon>Pseudomonadati</taxon>
        <taxon>Campylobacterota</taxon>
        <taxon>Epsilonproteobacteria</taxon>
        <taxon>Campylobacterales</taxon>
        <taxon>Helicobacteraceae</taxon>
        <taxon>Helicobacter</taxon>
    </lineage>
</organism>
<name>URE1_HELHP</name>
<keyword id="KW-0963">Cytoplasm</keyword>
<keyword id="KW-0378">Hydrolase</keyword>
<keyword id="KW-0479">Metal-binding</keyword>
<keyword id="KW-0533">Nickel</keyword>
<keyword id="KW-1185">Reference proteome</keyword>